<name>RS12_THET2</name>
<organism>
    <name type="scientific">Thermus thermophilus (strain ATCC BAA-163 / DSM 7039 / HB27)</name>
    <dbReference type="NCBI Taxonomy" id="262724"/>
    <lineage>
        <taxon>Bacteria</taxon>
        <taxon>Thermotogati</taxon>
        <taxon>Deinococcota</taxon>
        <taxon>Deinococci</taxon>
        <taxon>Thermales</taxon>
        <taxon>Thermaceae</taxon>
        <taxon>Thermus</taxon>
    </lineage>
</organism>
<protein>
    <recommendedName>
        <fullName evidence="3">Small ribosomal subunit protein uS12</fullName>
    </recommendedName>
    <alternativeName>
        <fullName>30S ribosomal protein S12</fullName>
    </alternativeName>
</protein>
<gene>
    <name type="primary">rpsL</name>
    <name type="synonym">rps12</name>
    <name type="ordered locus">TT_C1333</name>
</gene>
<comment type="function">
    <text evidence="1">With S4 and S5 plays an important role in translational accuracy.</text>
</comment>
<comment type="function">
    <text evidence="1">Interacts with and stabilizes bases of the 16S rRNA that are involved in tRNA selection in the A site and with the mRNA backbone. Located at the interface of the 30S and 50S subunits, it traverses the body of the 30S subunit contacting proteins on the other side and probably holding the rRNA structure together. The combined cluster of proteins S8, S12 and S17 appears to hold together the shoulder and platform of the 30S subunit (By similarity).</text>
</comment>
<comment type="subunit">
    <text evidence="1">Part of the 30S ribosomal subunit. Contacts proteins S8 and S17. May interact with IF1 in the 30S initiation complex (By similarity).</text>
</comment>
<comment type="similarity">
    <text evidence="3">Belongs to the universal ribosomal protein uS12 family.</text>
</comment>
<comment type="sequence caution" evidence="3">
    <conflict type="erroneous initiation">
        <sequence resource="EMBL-CDS" id="AAS81675"/>
    </conflict>
</comment>
<sequence length="132" mass="14599">MPTINQLVRKGREKVRKKSKVPALKGAPFRRGVCTVVRTVTPKKPNSALRKVAKVRLTSGYEVTAYIPGEGHNLQEHSVVLIRGGRVKDLPGVRYHIVRGVYDAAGVKDRKKSRSKYGTKKPKEAAKTAAKK</sequence>
<dbReference type="EMBL" id="AE017221">
    <property type="protein sequence ID" value="AAS81675.1"/>
    <property type="status" value="ALT_INIT"/>
    <property type="molecule type" value="Genomic_DNA"/>
</dbReference>
<dbReference type="RefSeq" id="WP_024118744.1">
    <property type="nucleotide sequence ID" value="NC_005835.1"/>
</dbReference>
<dbReference type="PDB" id="2R1G">
    <property type="method" value="EM"/>
    <property type="chains" value="H=2-125"/>
</dbReference>
<dbReference type="PDB" id="4KVB">
    <property type="method" value="X-ray"/>
    <property type="resolution" value="4.20 A"/>
    <property type="chains" value="L=1-132"/>
</dbReference>
<dbReference type="PDB" id="4V4I">
    <property type="method" value="X-ray"/>
    <property type="resolution" value="3.71 A"/>
    <property type="chains" value="m=1-132"/>
</dbReference>
<dbReference type="PDB" id="4V4J">
    <property type="method" value="X-ray"/>
    <property type="resolution" value="3.83 A"/>
    <property type="chains" value="m=1-132"/>
</dbReference>
<dbReference type="PDB" id="4V63">
    <property type="method" value="X-ray"/>
    <property type="resolution" value="3.21 A"/>
    <property type="chains" value="AL/CL=1-132"/>
</dbReference>
<dbReference type="PDB" id="4V67">
    <property type="method" value="X-ray"/>
    <property type="resolution" value="3.00 A"/>
    <property type="chains" value="AL/CL=1-132"/>
</dbReference>
<dbReference type="PDB" id="4V7P">
    <property type="method" value="X-ray"/>
    <property type="resolution" value="3.62 A"/>
    <property type="chains" value="AL/DL=2-125"/>
</dbReference>
<dbReference type="PDB" id="4V83">
    <property type="method" value="X-ray"/>
    <property type="resolution" value="3.50 A"/>
    <property type="chains" value="AL/CL=2-125"/>
</dbReference>
<dbReference type="PDB" id="4V84">
    <property type="method" value="X-ray"/>
    <property type="resolution" value="3.40 A"/>
    <property type="chains" value="AL/CL=2-125"/>
</dbReference>
<dbReference type="PDB" id="4V9J">
    <property type="method" value="X-ray"/>
    <property type="resolution" value="3.86 A"/>
    <property type="chains" value="AL/CL=2-126"/>
</dbReference>
<dbReference type="PDB" id="4V9K">
    <property type="method" value="X-ray"/>
    <property type="resolution" value="3.50 A"/>
    <property type="chains" value="AL/CL=2-126"/>
</dbReference>
<dbReference type="PDB" id="4V9L">
    <property type="method" value="X-ray"/>
    <property type="resolution" value="3.50 A"/>
    <property type="chains" value="AL/CL=2-126"/>
</dbReference>
<dbReference type="PDB" id="4V9M">
    <property type="method" value="X-ray"/>
    <property type="resolution" value="4.00 A"/>
    <property type="chains" value="AL/CL=2-126"/>
</dbReference>
<dbReference type="PDB" id="4V9N">
    <property type="method" value="X-ray"/>
    <property type="resolution" value="3.40 A"/>
    <property type="chains" value="AL/CL=2-123"/>
</dbReference>
<dbReference type="PDB" id="4V9Q">
    <property type="method" value="X-ray"/>
    <property type="resolution" value="3.40 A"/>
    <property type="chains" value="BL/DL=2-123"/>
</dbReference>
<dbReference type="PDB" id="4W29">
    <property type="method" value="X-ray"/>
    <property type="resolution" value="3.80 A"/>
    <property type="chains" value="AL/CL=2-126"/>
</dbReference>
<dbReference type="PDB" id="4XEJ">
    <property type="method" value="X-ray"/>
    <property type="resolution" value="3.80 A"/>
    <property type="chains" value="AS12/BS12=2-123"/>
</dbReference>
<dbReference type="PDB" id="5J4D">
    <property type="method" value="X-ray"/>
    <property type="resolution" value="3.10 A"/>
    <property type="chains" value="UA/ZC=1-132"/>
</dbReference>
<dbReference type="PDB" id="6B4V">
    <property type="method" value="X-ray"/>
    <property type="resolution" value="3.40 A"/>
    <property type="chains" value="UA/YC=1-132"/>
</dbReference>
<dbReference type="PDB" id="6BOH">
    <property type="method" value="X-ray"/>
    <property type="resolution" value="3.40 A"/>
    <property type="chains" value="AD/VA=1-132"/>
</dbReference>
<dbReference type="PDB" id="6BOK">
    <property type="method" value="X-ray"/>
    <property type="resolution" value="3.55 A"/>
    <property type="chains" value="TA/WC=1-132"/>
</dbReference>
<dbReference type="PDB" id="6N1D">
    <property type="method" value="X-ray"/>
    <property type="resolution" value="3.20 A"/>
    <property type="chains" value="AS12/BS12=2-132"/>
</dbReference>
<dbReference type="PDBsum" id="2R1G"/>
<dbReference type="PDBsum" id="4KVB"/>
<dbReference type="PDBsum" id="4V4I"/>
<dbReference type="PDBsum" id="4V4J"/>
<dbReference type="PDBsum" id="4V63"/>
<dbReference type="PDBsum" id="4V67"/>
<dbReference type="PDBsum" id="4V7P"/>
<dbReference type="PDBsum" id="4V83"/>
<dbReference type="PDBsum" id="4V84"/>
<dbReference type="PDBsum" id="4V9J"/>
<dbReference type="PDBsum" id="4V9K"/>
<dbReference type="PDBsum" id="4V9L"/>
<dbReference type="PDBsum" id="4V9M"/>
<dbReference type="PDBsum" id="4V9N"/>
<dbReference type="PDBsum" id="4V9Q"/>
<dbReference type="PDBsum" id="4W29"/>
<dbReference type="PDBsum" id="4XEJ"/>
<dbReference type="PDBsum" id="5J4D"/>
<dbReference type="PDBsum" id="6B4V"/>
<dbReference type="PDBsum" id="6BOH"/>
<dbReference type="PDBsum" id="6BOK"/>
<dbReference type="PDBsum" id="6N1D"/>
<dbReference type="SMR" id="P61941"/>
<dbReference type="IntAct" id="P61941">
    <property type="interactions" value="4"/>
</dbReference>
<dbReference type="GeneID" id="3169892"/>
<dbReference type="KEGG" id="tth:TT_C1333"/>
<dbReference type="eggNOG" id="COG0048">
    <property type="taxonomic scope" value="Bacteria"/>
</dbReference>
<dbReference type="HOGENOM" id="CLU_104295_1_2_0"/>
<dbReference type="EvolutionaryTrace" id="P61941"/>
<dbReference type="Proteomes" id="UP000000592">
    <property type="component" value="Chromosome"/>
</dbReference>
<dbReference type="GO" id="GO:0015935">
    <property type="term" value="C:small ribosomal subunit"/>
    <property type="evidence" value="ECO:0007669"/>
    <property type="project" value="InterPro"/>
</dbReference>
<dbReference type="GO" id="GO:0019843">
    <property type="term" value="F:rRNA binding"/>
    <property type="evidence" value="ECO:0007669"/>
    <property type="project" value="UniProtKB-UniRule"/>
</dbReference>
<dbReference type="GO" id="GO:0003735">
    <property type="term" value="F:structural constituent of ribosome"/>
    <property type="evidence" value="ECO:0007669"/>
    <property type="project" value="InterPro"/>
</dbReference>
<dbReference type="GO" id="GO:0000049">
    <property type="term" value="F:tRNA binding"/>
    <property type="evidence" value="ECO:0007669"/>
    <property type="project" value="UniProtKB-UniRule"/>
</dbReference>
<dbReference type="GO" id="GO:0006412">
    <property type="term" value="P:translation"/>
    <property type="evidence" value="ECO:0007669"/>
    <property type="project" value="UniProtKB-UniRule"/>
</dbReference>
<dbReference type="CDD" id="cd03368">
    <property type="entry name" value="Ribosomal_S12"/>
    <property type="match status" value="1"/>
</dbReference>
<dbReference type="FunFam" id="2.40.50.140:FF:000001">
    <property type="entry name" value="30S ribosomal protein S12"/>
    <property type="match status" value="1"/>
</dbReference>
<dbReference type="Gene3D" id="2.40.50.140">
    <property type="entry name" value="Nucleic acid-binding proteins"/>
    <property type="match status" value="1"/>
</dbReference>
<dbReference type="HAMAP" id="MF_00403_B">
    <property type="entry name" value="Ribosomal_uS12_B"/>
    <property type="match status" value="1"/>
</dbReference>
<dbReference type="InterPro" id="IPR012340">
    <property type="entry name" value="NA-bd_OB-fold"/>
</dbReference>
<dbReference type="InterPro" id="IPR006032">
    <property type="entry name" value="Ribosomal_uS12"/>
</dbReference>
<dbReference type="InterPro" id="IPR005679">
    <property type="entry name" value="Ribosomal_uS12_bac"/>
</dbReference>
<dbReference type="NCBIfam" id="TIGR00981">
    <property type="entry name" value="rpsL_bact"/>
    <property type="match status" value="1"/>
</dbReference>
<dbReference type="PANTHER" id="PTHR11652">
    <property type="entry name" value="30S RIBOSOMAL PROTEIN S12 FAMILY MEMBER"/>
    <property type="match status" value="1"/>
</dbReference>
<dbReference type="Pfam" id="PF00164">
    <property type="entry name" value="Ribosom_S12_S23"/>
    <property type="match status" value="1"/>
</dbReference>
<dbReference type="PIRSF" id="PIRSF002133">
    <property type="entry name" value="Ribosomal_S12/S23"/>
    <property type="match status" value="1"/>
</dbReference>
<dbReference type="PRINTS" id="PR01034">
    <property type="entry name" value="RIBOSOMALS12"/>
</dbReference>
<dbReference type="SUPFAM" id="SSF50249">
    <property type="entry name" value="Nucleic acid-binding proteins"/>
    <property type="match status" value="1"/>
</dbReference>
<dbReference type="PROSITE" id="PS00055">
    <property type="entry name" value="RIBOSOMAL_S12"/>
    <property type="match status" value="1"/>
</dbReference>
<evidence type="ECO:0000250" key="1"/>
<evidence type="ECO:0000256" key="2">
    <source>
        <dbReference type="SAM" id="MobiDB-lite"/>
    </source>
</evidence>
<evidence type="ECO:0000305" key="3"/>
<evidence type="ECO:0007829" key="4">
    <source>
        <dbReference type="PDB" id="4V63"/>
    </source>
</evidence>
<evidence type="ECO:0007829" key="5">
    <source>
        <dbReference type="PDB" id="4V67"/>
    </source>
</evidence>
<evidence type="ECO:0007829" key="6">
    <source>
        <dbReference type="PDB" id="4V84"/>
    </source>
</evidence>
<evidence type="ECO:0007829" key="7">
    <source>
        <dbReference type="PDB" id="4V9K"/>
    </source>
</evidence>
<evidence type="ECO:0007829" key="8">
    <source>
        <dbReference type="PDB" id="4V9L"/>
    </source>
</evidence>
<accession>P61941</accession>
<feature type="initiator methionine" description="Removed" evidence="1">
    <location>
        <position position="1"/>
    </location>
</feature>
<feature type="chain" id="PRO_0000146340" description="Small ribosomal subunit protein uS12">
    <location>
        <begin position="2"/>
        <end position="132"/>
    </location>
</feature>
<feature type="region of interest" description="Disordered" evidence="2">
    <location>
        <begin position="106"/>
        <end position="132"/>
    </location>
</feature>
<feature type="compositionally biased region" description="Basic residues" evidence="2">
    <location>
        <begin position="109"/>
        <end position="120"/>
    </location>
</feature>
<feature type="modified residue" description="3-methylthioaspartic acid" evidence="1">
    <location>
        <position position="89"/>
    </location>
</feature>
<feature type="helix" evidence="5">
    <location>
        <begin position="4"/>
        <end position="8"/>
    </location>
</feature>
<feature type="turn" evidence="4">
    <location>
        <begin position="24"/>
        <end position="26"/>
    </location>
</feature>
<feature type="strand" evidence="5">
    <location>
        <begin position="30"/>
        <end position="40"/>
    </location>
</feature>
<feature type="turn" evidence="7">
    <location>
        <begin position="43"/>
        <end position="45"/>
    </location>
</feature>
<feature type="strand" evidence="5">
    <location>
        <begin position="50"/>
        <end position="57"/>
    </location>
</feature>
<feature type="strand" evidence="5">
    <location>
        <begin position="63"/>
        <end position="66"/>
    </location>
</feature>
<feature type="strand" evidence="7">
    <location>
        <begin position="68"/>
        <end position="71"/>
    </location>
</feature>
<feature type="strand" evidence="5">
    <location>
        <begin position="79"/>
        <end position="82"/>
    </location>
</feature>
<feature type="strand" evidence="5">
    <location>
        <begin position="90"/>
        <end position="92"/>
    </location>
</feature>
<feature type="strand" evidence="6">
    <location>
        <begin position="95"/>
        <end position="97"/>
    </location>
</feature>
<feature type="strand" evidence="4">
    <location>
        <begin position="99"/>
        <end position="101"/>
    </location>
</feature>
<feature type="strand" evidence="8">
    <location>
        <begin position="106"/>
        <end position="109"/>
    </location>
</feature>
<feature type="helix" evidence="5">
    <location>
        <begin position="114"/>
        <end position="117"/>
    </location>
</feature>
<reference key="1">
    <citation type="journal article" date="2004" name="Nat. Biotechnol.">
        <title>The genome sequence of the extreme thermophile Thermus thermophilus.</title>
        <authorList>
            <person name="Henne A."/>
            <person name="Brueggemann H."/>
            <person name="Raasch C."/>
            <person name="Wiezer A."/>
            <person name="Hartsch T."/>
            <person name="Liesegang H."/>
            <person name="Johann A."/>
            <person name="Lienard T."/>
            <person name="Gohl O."/>
            <person name="Martinez-Arias R."/>
            <person name="Jacobi C."/>
            <person name="Starkuviene V."/>
            <person name="Schlenczeck S."/>
            <person name="Dencker S."/>
            <person name="Huber R."/>
            <person name="Klenk H.-P."/>
            <person name="Kramer W."/>
            <person name="Merkl R."/>
            <person name="Gottschalk G."/>
            <person name="Fritz H.-J."/>
        </authorList>
    </citation>
    <scope>NUCLEOTIDE SEQUENCE [LARGE SCALE GENOMIC DNA]</scope>
    <source>
        <strain>ATCC BAA-163 / DSM 7039 / HB27</strain>
    </source>
</reference>
<proteinExistence type="evidence at protein level"/>
<keyword id="KW-0002">3D-structure</keyword>
<keyword id="KW-0488">Methylation</keyword>
<keyword id="KW-0687">Ribonucleoprotein</keyword>
<keyword id="KW-0689">Ribosomal protein</keyword>
<keyword id="KW-0694">RNA-binding</keyword>
<keyword id="KW-0699">rRNA-binding</keyword>
<keyword id="KW-0820">tRNA-binding</keyword>